<accession>B9DNK0</accession>
<sequence>MGKIIGIDLGTTNSCVAVLEGDEPKVIQNPEGARTTPSVVAFKNGETQVGEVAKRQAITNPNTIQSIKREMGTDYKVDVDGKNYTPQEISAMILQNLKSTAESYLGDKVDKAVITVPAYFNDAERQATKDAGKIAGLEVERIINEPTAAALAYGLDKTEQDEKVLVFDLGGGTFDVSILELGDGVFEVLSTAGDNKLGGDDFDQVIIDYLVEEFKKENGIDLSQDKMALQRLKDAAEKAKKDLSGVSQTQISLPFISAGESGPLHLEITLTRSKFEELSDELVRRTMGPTRQALSDAGLSSNDIDEVILVGGSTRIPAVQEAVKKEVGKEPNKSVNPDEVVAMGAAIQGGVISGDVKDVVLLDVTPLSLGIEIMGGRMNTLIERNTTIPTSKSQVYSTAADNQPAVDIHVLQGERPMASDNKTLGRFSLTDIPPAPRGVPQIEVTFDIDKNGIVNVTAKDLGTNKEQNITIESSSALSDDEIDRMVKDAEQNAEEDKKRREESDLRNEADSLVFQVDKTLKDLGDNVSEDDKKQAEDKKEALKSALEGQDLEDIKTKKEELEKVVQELSMKVYQQAQQGDAAGSNQSDVEDAEYTEVKDDDDKKDNK</sequence>
<comment type="function">
    <text evidence="1">Acts as a chaperone.</text>
</comment>
<comment type="induction">
    <text evidence="1">By stress conditions e.g. heat shock.</text>
</comment>
<comment type="similarity">
    <text evidence="1">Belongs to the heat shock protein 70 family.</text>
</comment>
<organism>
    <name type="scientific">Staphylococcus carnosus (strain TM300)</name>
    <dbReference type="NCBI Taxonomy" id="396513"/>
    <lineage>
        <taxon>Bacteria</taxon>
        <taxon>Bacillati</taxon>
        <taxon>Bacillota</taxon>
        <taxon>Bacilli</taxon>
        <taxon>Bacillales</taxon>
        <taxon>Staphylococcaceae</taxon>
        <taxon>Staphylococcus</taxon>
    </lineage>
</organism>
<proteinExistence type="inferred from homology"/>
<dbReference type="EMBL" id="AM295250">
    <property type="protein sequence ID" value="CAL28109.1"/>
    <property type="molecule type" value="Genomic_DNA"/>
</dbReference>
<dbReference type="RefSeq" id="WP_015900449.1">
    <property type="nucleotide sequence ID" value="NC_012121.1"/>
</dbReference>
<dbReference type="SMR" id="B9DNK0"/>
<dbReference type="GeneID" id="93793627"/>
<dbReference type="KEGG" id="sca:SCA_1202"/>
<dbReference type="eggNOG" id="COG0443">
    <property type="taxonomic scope" value="Bacteria"/>
</dbReference>
<dbReference type="HOGENOM" id="CLU_005965_2_4_9"/>
<dbReference type="OrthoDB" id="9766019at2"/>
<dbReference type="BioCyc" id="SCAR396513:SCA_RS06020-MONOMER"/>
<dbReference type="Proteomes" id="UP000000444">
    <property type="component" value="Chromosome"/>
</dbReference>
<dbReference type="GO" id="GO:0005524">
    <property type="term" value="F:ATP binding"/>
    <property type="evidence" value="ECO:0007669"/>
    <property type="project" value="UniProtKB-UniRule"/>
</dbReference>
<dbReference type="GO" id="GO:0140662">
    <property type="term" value="F:ATP-dependent protein folding chaperone"/>
    <property type="evidence" value="ECO:0007669"/>
    <property type="project" value="InterPro"/>
</dbReference>
<dbReference type="GO" id="GO:0051082">
    <property type="term" value="F:unfolded protein binding"/>
    <property type="evidence" value="ECO:0007669"/>
    <property type="project" value="InterPro"/>
</dbReference>
<dbReference type="CDD" id="cd10234">
    <property type="entry name" value="ASKHA_NBD_HSP70_DnaK-like"/>
    <property type="match status" value="1"/>
</dbReference>
<dbReference type="FunFam" id="2.60.34.10:FF:000014">
    <property type="entry name" value="Chaperone protein DnaK HSP70"/>
    <property type="match status" value="1"/>
</dbReference>
<dbReference type="FunFam" id="1.20.1270.10:FF:000001">
    <property type="entry name" value="Molecular chaperone DnaK"/>
    <property type="match status" value="1"/>
</dbReference>
<dbReference type="FunFam" id="3.30.420.40:FF:000071">
    <property type="entry name" value="Molecular chaperone DnaK"/>
    <property type="match status" value="1"/>
</dbReference>
<dbReference type="FunFam" id="3.90.640.10:FF:000003">
    <property type="entry name" value="Molecular chaperone DnaK"/>
    <property type="match status" value="1"/>
</dbReference>
<dbReference type="Gene3D" id="1.20.1270.10">
    <property type="match status" value="1"/>
</dbReference>
<dbReference type="Gene3D" id="3.30.420.40">
    <property type="match status" value="2"/>
</dbReference>
<dbReference type="Gene3D" id="3.90.640.10">
    <property type="entry name" value="Actin, Chain A, domain 4"/>
    <property type="match status" value="1"/>
</dbReference>
<dbReference type="Gene3D" id="2.60.34.10">
    <property type="entry name" value="Substrate Binding Domain Of DNAk, Chain A, domain 1"/>
    <property type="match status" value="1"/>
</dbReference>
<dbReference type="HAMAP" id="MF_00332">
    <property type="entry name" value="DnaK"/>
    <property type="match status" value="1"/>
</dbReference>
<dbReference type="InterPro" id="IPR043129">
    <property type="entry name" value="ATPase_NBD"/>
</dbReference>
<dbReference type="InterPro" id="IPR012725">
    <property type="entry name" value="Chaperone_DnaK"/>
</dbReference>
<dbReference type="InterPro" id="IPR018181">
    <property type="entry name" value="Heat_shock_70_CS"/>
</dbReference>
<dbReference type="InterPro" id="IPR029048">
    <property type="entry name" value="HSP70_C_sf"/>
</dbReference>
<dbReference type="InterPro" id="IPR029047">
    <property type="entry name" value="HSP70_peptide-bd_sf"/>
</dbReference>
<dbReference type="InterPro" id="IPR013126">
    <property type="entry name" value="Hsp_70_fam"/>
</dbReference>
<dbReference type="NCBIfam" id="NF001413">
    <property type="entry name" value="PRK00290.1"/>
    <property type="match status" value="1"/>
</dbReference>
<dbReference type="NCBIfam" id="TIGR02350">
    <property type="entry name" value="prok_dnaK"/>
    <property type="match status" value="1"/>
</dbReference>
<dbReference type="PANTHER" id="PTHR19375">
    <property type="entry name" value="HEAT SHOCK PROTEIN 70KDA"/>
    <property type="match status" value="1"/>
</dbReference>
<dbReference type="Pfam" id="PF00012">
    <property type="entry name" value="HSP70"/>
    <property type="match status" value="1"/>
</dbReference>
<dbReference type="PRINTS" id="PR00301">
    <property type="entry name" value="HEATSHOCK70"/>
</dbReference>
<dbReference type="SUPFAM" id="SSF53067">
    <property type="entry name" value="Actin-like ATPase domain"/>
    <property type="match status" value="2"/>
</dbReference>
<dbReference type="SUPFAM" id="SSF100934">
    <property type="entry name" value="Heat shock protein 70kD (HSP70), C-terminal subdomain"/>
    <property type="match status" value="1"/>
</dbReference>
<dbReference type="SUPFAM" id="SSF100920">
    <property type="entry name" value="Heat shock protein 70kD (HSP70), peptide-binding domain"/>
    <property type="match status" value="1"/>
</dbReference>
<dbReference type="PROSITE" id="PS00297">
    <property type="entry name" value="HSP70_1"/>
    <property type="match status" value="1"/>
</dbReference>
<dbReference type="PROSITE" id="PS00329">
    <property type="entry name" value="HSP70_2"/>
    <property type="match status" value="1"/>
</dbReference>
<dbReference type="PROSITE" id="PS01036">
    <property type="entry name" value="HSP70_3"/>
    <property type="match status" value="1"/>
</dbReference>
<protein>
    <recommendedName>
        <fullName evidence="1">Chaperone protein DnaK</fullName>
    </recommendedName>
    <alternativeName>
        <fullName evidence="1">HSP70</fullName>
    </alternativeName>
    <alternativeName>
        <fullName evidence="1">Heat shock 70 kDa protein</fullName>
    </alternativeName>
    <alternativeName>
        <fullName evidence="1">Heat shock protein 70</fullName>
    </alternativeName>
</protein>
<feature type="chain" id="PRO_1000133160" description="Chaperone protein DnaK">
    <location>
        <begin position="1"/>
        <end position="607"/>
    </location>
</feature>
<feature type="region of interest" description="Disordered" evidence="2">
    <location>
        <begin position="490"/>
        <end position="510"/>
    </location>
</feature>
<feature type="region of interest" description="Disordered" evidence="2">
    <location>
        <begin position="524"/>
        <end position="555"/>
    </location>
</feature>
<feature type="region of interest" description="Disordered" evidence="2">
    <location>
        <begin position="574"/>
        <end position="607"/>
    </location>
</feature>
<feature type="compositionally biased region" description="Basic and acidic residues" evidence="2">
    <location>
        <begin position="490"/>
        <end position="509"/>
    </location>
</feature>
<feature type="compositionally biased region" description="Basic and acidic residues" evidence="2">
    <location>
        <begin position="524"/>
        <end position="542"/>
    </location>
</feature>
<feature type="compositionally biased region" description="Polar residues" evidence="2">
    <location>
        <begin position="574"/>
        <end position="587"/>
    </location>
</feature>
<feature type="compositionally biased region" description="Basic and acidic residues" evidence="2">
    <location>
        <begin position="595"/>
        <end position="607"/>
    </location>
</feature>
<feature type="modified residue" description="Phosphothreonine; by autocatalysis" evidence="1">
    <location>
        <position position="173"/>
    </location>
</feature>
<gene>
    <name evidence="1" type="primary">dnaK</name>
    <name type="ordered locus">Sca_1202</name>
</gene>
<keyword id="KW-0067">ATP-binding</keyword>
<keyword id="KW-0143">Chaperone</keyword>
<keyword id="KW-0547">Nucleotide-binding</keyword>
<keyword id="KW-0597">Phosphoprotein</keyword>
<keyword id="KW-1185">Reference proteome</keyword>
<keyword id="KW-0346">Stress response</keyword>
<name>DNAK_STACT</name>
<reference key="1">
    <citation type="journal article" date="2009" name="Appl. Environ. Microbiol.">
        <title>Genome analysis of the meat starter culture bacterium Staphylococcus carnosus TM300.</title>
        <authorList>
            <person name="Rosenstein R."/>
            <person name="Nerz C."/>
            <person name="Biswas L."/>
            <person name="Resch A."/>
            <person name="Raddatz G."/>
            <person name="Schuster S.C."/>
            <person name="Goetz F."/>
        </authorList>
    </citation>
    <scope>NUCLEOTIDE SEQUENCE [LARGE SCALE GENOMIC DNA]</scope>
    <source>
        <strain>TM300</strain>
    </source>
</reference>
<evidence type="ECO:0000255" key="1">
    <source>
        <dbReference type="HAMAP-Rule" id="MF_00332"/>
    </source>
</evidence>
<evidence type="ECO:0000256" key="2">
    <source>
        <dbReference type="SAM" id="MobiDB-lite"/>
    </source>
</evidence>